<gene>
    <name evidence="7" type="ordered locus">At1g13930</name>
    <name evidence="6" type="ORF">F16A14.14</name>
    <name evidence="5" type="ORF">F7A19.2</name>
</gene>
<dbReference type="EMBL" id="AC007576">
    <property type="protein sequence ID" value="AAD39279.1"/>
    <property type="molecule type" value="Genomic_DNA"/>
</dbReference>
<dbReference type="EMBL" id="AC068197">
    <property type="protein sequence ID" value="AAF79399.1"/>
    <property type="molecule type" value="Genomic_DNA"/>
</dbReference>
<dbReference type="EMBL" id="CP002684">
    <property type="protein sequence ID" value="AEE29084.1"/>
    <property type="molecule type" value="Genomic_DNA"/>
</dbReference>
<dbReference type="EMBL" id="CP002684">
    <property type="protein sequence ID" value="AEE29085.1"/>
    <property type="molecule type" value="Genomic_DNA"/>
</dbReference>
<dbReference type="EMBL" id="CP002684">
    <property type="protein sequence ID" value="AEE29086.1"/>
    <property type="molecule type" value="Genomic_DNA"/>
</dbReference>
<dbReference type="EMBL" id="AY045640">
    <property type="protein sequence ID" value="AAK73998.1"/>
    <property type="molecule type" value="mRNA"/>
</dbReference>
<dbReference type="EMBL" id="AY058230">
    <property type="protein sequence ID" value="AAL15404.1"/>
    <property type="molecule type" value="mRNA"/>
</dbReference>
<dbReference type="EMBL" id="AY085412">
    <property type="protein sequence ID" value="AAM62639.1"/>
    <property type="molecule type" value="mRNA"/>
</dbReference>
<dbReference type="PIR" id="D86272">
    <property type="entry name" value="D86272"/>
</dbReference>
<dbReference type="RefSeq" id="NP_001184989.1">
    <property type="nucleotide sequence ID" value="NM_001198060.1"/>
</dbReference>
<dbReference type="RefSeq" id="NP_001184990.1">
    <property type="nucleotide sequence ID" value="NM_001198061.1"/>
</dbReference>
<dbReference type="RefSeq" id="NP_563934.1">
    <property type="nucleotide sequence ID" value="NM_101259.3"/>
</dbReference>
<dbReference type="SMR" id="Q9XI93"/>
<dbReference type="FunCoup" id="Q9XI93">
    <property type="interactions" value="178"/>
</dbReference>
<dbReference type="IntAct" id="Q9XI93">
    <property type="interactions" value="1"/>
</dbReference>
<dbReference type="STRING" id="3702.Q9XI93"/>
<dbReference type="iPTMnet" id="Q9XI93"/>
<dbReference type="MetOSite" id="Q9XI93"/>
<dbReference type="PaxDb" id="3702-AT1G13930.3"/>
<dbReference type="ProMEX" id="Q9XI93"/>
<dbReference type="ProteomicsDB" id="183657"/>
<dbReference type="EnsemblPlants" id="AT1G13930.1">
    <property type="protein sequence ID" value="AT1G13930.1"/>
    <property type="gene ID" value="AT1G13930"/>
</dbReference>
<dbReference type="EnsemblPlants" id="AT1G13930.2">
    <property type="protein sequence ID" value="AT1G13930.2"/>
    <property type="gene ID" value="AT1G13930"/>
</dbReference>
<dbReference type="EnsemblPlants" id="AT1G13930.3">
    <property type="protein sequence ID" value="AT1G13930.3"/>
    <property type="gene ID" value="AT1G13930"/>
</dbReference>
<dbReference type="GeneID" id="837953"/>
<dbReference type="Gramene" id="AT1G13930.1">
    <property type="protein sequence ID" value="AT1G13930.1"/>
    <property type="gene ID" value="AT1G13930"/>
</dbReference>
<dbReference type="Gramene" id="AT1G13930.2">
    <property type="protein sequence ID" value="AT1G13930.2"/>
    <property type="gene ID" value="AT1G13930"/>
</dbReference>
<dbReference type="Gramene" id="AT1G13930.3">
    <property type="protein sequence ID" value="AT1G13930.3"/>
    <property type="gene ID" value="AT1G13930"/>
</dbReference>
<dbReference type="KEGG" id="ath:AT1G13930"/>
<dbReference type="Araport" id="AT1G13930"/>
<dbReference type="TAIR" id="AT1G13930"/>
<dbReference type="eggNOG" id="ENOG502S1DM">
    <property type="taxonomic scope" value="Eukaryota"/>
</dbReference>
<dbReference type="HOGENOM" id="CLU_122604_0_0_1"/>
<dbReference type="InParanoid" id="Q9XI93"/>
<dbReference type="OMA" id="MNFISDQ"/>
<dbReference type="OrthoDB" id="695806at2759"/>
<dbReference type="PhylomeDB" id="Q9XI93"/>
<dbReference type="PRO" id="PR:Q9XI93"/>
<dbReference type="Proteomes" id="UP000006548">
    <property type="component" value="Chromosome 1"/>
</dbReference>
<dbReference type="ExpressionAtlas" id="Q9XI93">
    <property type="expression patterns" value="baseline and differential"/>
</dbReference>
<dbReference type="GO" id="GO:0009507">
    <property type="term" value="C:chloroplast"/>
    <property type="evidence" value="ECO:0007005"/>
    <property type="project" value="TAIR"/>
</dbReference>
<dbReference type="GO" id="GO:0009941">
    <property type="term" value="C:chloroplast envelope"/>
    <property type="evidence" value="ECO:0007005"/>
    <property type="project" value="TAIR"/>
</dbReference>
<dbReference type="GO" id="GO:0009570">
    <property type="term" value="C:chloroplast stroma"/>
    <property type="evidence" value="ECO:0007005"/>
    <property type="project" value="TAIR"/>
</dbReference>
<dbReference type="GO" id="GO:0005829">
    <property type="term" value="C:cytosol"/>
    <property type="evidence" value="ECO:0007005"/>
    <property type="project" value="TAIR"/>
</dbReference>
<dbReference type="GO" id="GO:0005576">
    <property type="term" value="C:extracellular region"/>
    <property type="evidence" value="ECO:0007005"/>
    <property type="project" value="TAIR"/>
</dbReference>
<dbReference type="GO" id="GO:0005886">
    <property type="term" value="C:plasma membrane"/>
    <property type="evidence" value="ECO:0007005"/>
    <property type="project" value="TAIR"/>
</dbReference>
<dbReference type="GO" id="GO:0003729">
    <property type="term" value="F:mRNA binding"/>
    <property type="evidence" value="ECO:0000314"/>
    <property type="project" value="TAIR"/>
</dbReference>
<dbReference type="GO" id="GO:0009738">
    <property type="term" value="P:abscisic acid-activated signaling pathway"/>
    <property type="evidence" value="ECO:0007669"/>
    <property type="project" value="UniProtKB-KW"/>
</dbReference>
<dbReference type="GO" id="GO:0010115">
    <property type="term" value="P:regulation of abscisic acid biosynthetic process"/>
    <property type="evidence" value="ECO:0007669"/>
    <property type="project" value="InterPro"/>
</dbReference>
<dbReference type="GO" id="GO:0009408">
    <property type="term" value="P:response to heat"/>
    <property type="evidence" value="ECO:0007669"/>
    <property type="project" value="InterPro"/>
</dbReference>
<dbReference type="GO" id="GO:0009651">
    <property type="term" value="P:response to salt stress"/>
    <property type="evidence" value="ECO:0000315"/>
    <property type="project" value="TAIR"/>
</dbReference>
<dbReference type="InterPro" id="IPR040294">
    <property type="entry name" value="Nodulin-rel_1/2"/>
</dbReference>
<dbReference type="PANTHER" id="PTHR35098">
    <property type="entry name" value="EXPRESSED PROTEIN"/>
    <property type="match status" value="1"/>
</dbReference>
<dbReference type="PANTHER" id="PTHR35098:SF1">
    <property type="entry name" value="NODULIN-RELATED PROTEIN 2"/>
    <property type="match status" value="1"/>
</dbReference>
<name>NDRP2_ARATH</name>
<feature type="chain" id="PRO_0000453268" description="Nodulin-related protein 2">
    <location>
        <begin position="1"/>
        <end position="155"/>
    </location>
</feature>
<feature type="region of interest" description="Disordered" evidence="2">
    <location>
        <begin position="1"/>
        <end position="37"/>
    </location>
</feature>
<feature type="region of interest" description="Disordered" evidence="2">
    <location>
        <begin position="85"/>
        <end position="155"/>
    </location>
</feature>
<feature type="compositionally biased region" description="Basic and acidic residues" evidence="2">
    <location>
        <begin position="95"/>
        <end position="106"/>
    </location>
</feature>
<feature type="compositionally biased region" description="Low complexity" evidence="2">
    <location>
        <begin position="120"/>
        <end position="130"/>
    </location>
</feature>
<feature type="modified residue" description="N-acetylmethionine" evidence="1">
    <location>
        <position position="1"/>
    </location>
</feature>
<feature type="sequence conflict" description="In Ref. 4; AAM62639." evidence="4" ref="4">
    <original>A</original>
    <variation>S</variation>
    <location>
        <position position="78"/>
    </location>
</feature>
<feature type="sequence conflict" description="In Ref. 4; AAM62639." evidence="4" ref="4">
    <original>Q</original>
    <variation>H</variation>
    <location>
        <position position="92"/>
    </location>
</feature>
<proteinExistence type="evidence at protein level"/>
<sequence length="155" mass="16164">MNFISDQVKKLSSSTPEEPDHNKPVEGTETATRPATNAELMASAKVVAEAAQAAARNESDKLDKGKVAGASADILDAAEKYGKFDEKSSTGQYLDKAEKYLNDYESSHSTGAGGPPPPTSQAEPASQPEPAAKKDDEESGGGLGGYAKMAQGFLK</sequence>
<evidence type="ECO:0000250" key="1">
    <source>
        <dbReference type="UniProtKB" id="Q9ZQ80"/>
    </source>
</evidence>
<evidence type="ECO:0000256" key="2">
    <source>
        <dbReference type="SAM" id="MobiDB-lite"/>
    </source>
</evidence>
<evidence type="ECO:0000269" key="3">
    <source>
    </source>
</evidence>
<evidence type="ECO:0000305" key="4"/>
<evidence type="ECO:0000312" key="5">
    <source>
        <dbReference type="EMBL" id="AAD39279.1"/>
    </source>
</evidence>
<evidence type="ECO:0000312" key="6">
    <source>
        <dbReference type="EMBL" id="AAF79399.1"/>
    </source>
</evidence>
<evidence type="ECO:0000312" key="7">
    <source>
        <dbReference type="EMBL" id="AEE29084.1"/>
    </source>
</evidence>
<comment type="function">
    <text evidence="1">May be a negative regulator of the ABA signaling/synthesis pathway.</text>
</comment>
<comment type="subunit">
    <text evidence="3">Interacts with DEK3.</text>
</comment>
<keyword id="KW-0938">Abscisic acid signaling pathway</keyword>
<keyword id="KW-0007">Acetylation</keyword>
<keyword id="KW-1185">Reference proteome</keyword>
<accession>Q9XI93</accession>
<accession>Q8LEH5</accession>
<protein>
    <recommendedName>
        <fullName evidence="4">Nodulin-related protein 2</fullName>
    </recommendedName>
</protein>
<reference key="1">
    <citation type="journal article" date="2000" name="Nature">
        <title>Sequence and analysis of chromosome 1 of the plant Arabidopsis thaliana.</title>
        <authorList>
            <person name="Theologis A."/>
            <person name="Ecker J.R."/>
            <person name="Palm C.J."/>
            <person name="Federspiel N.A."/>
            <person name="Kaul S."/>
            <person name="White O."/>
            <person name="Alonso J."/>
            <person name="Altafi H."/>
            <person name="Araujo R."/>
            <person name="Bowman C.L."/>
            <person name="Brooks S.Y."/>
            <person name="Buehler E."/>
            <person name="Chan A."/>
            <person name="Chao Q."/>
            <person name="Chen H."/>
            <person name="Cheuk R.F."/>
            <person name="Chin C.W."/>
            <person name="Chung M.K."/>
            <person name="Conn L."/>
            <person name="Conway A.B."/>
            <person name="Conway A.R."/>
            <person name="Creasy T.H."/>
            <person name="Dewar K."/>
            <person name="Dunn P."/>
            <person name="Etgu P."/>
            <person name="Feldblyum T.V."/>
            <person name="Feng J.-D."/>
            <person name="Fong B."/>
            <person name="Fujii C.Y."/>
            <person name="Gill J.E."/>
            <person name="Goldsmith A.D."/>
            <person name="Haas B."/>
            <person name="Hansen N.F."/>
            <person name="Hughes B."/>
            <person name="Huizar L."/>
            <person name="Hunter J.L."/>
            <person name="Jenkins J."/>
            <person name="Johnson-Hopson C."/>
            <person name="Khan S."/>
            <person name="Khaykin E."/>
            <person name="Kim C.J."/>
            <person name="Koo H.L."/>
            <person name="Kremenetskaia I."/>
            <person name="Kurtz D.B."/>
            <person name="Kwan A."/>
            <person name="Lam B."/>
            <person name="Langin-Hooper S."/>
            <person name="Lee A."/>
            <person name="Lee J.M."/>
            <person name="Lenz C.A."/>
            <person name="Li J.H."/>
            <person name="Li Y.-P."/>
            <person name="Lin X."/>
            <person name="Liu S.X."/>
            <person name="Liu Z.A."/>
            <person name="Luros J.S."/>
            <person name="Maiti R."/>
            <person name="Marziali A."/>
            <person name="Militscher J."/>
            <person name="Miranda M."/>
            <person name="Nguyen M."/>
            <person name="Nierman W.C."/>
            <person name="Osborne B.I."/>
            <person name="Pai G."/>
            <person name="Peterson J."/>
            <person name="Pham P.K."/>
            <person name="Rizzo M."/>
            <person name="Rooney T."/>
            <person name="Rowley D."/>
            <person name="Sakano H."/>
            <person name="Salzberg S.L."/>
            <person name="Schwartz J.R."/>
            <person name="Shinn P."/>
            <person name="Southwick A.M."/>
            <person name="Sun H."/>
            <person name="Tallon L.J."/>
            <person name="Tambunga G."/>
            <person name="Toriumi M.J."/>
            <person name="Town C.D."/>
            <person name="Utterback T."/>
            <person name="Van Aken S."/>
            <person name="Vaysberg M."/>
            <person name="Vysotskaia V.S."/>
            <person name="Walker M."/>
            <person name="Wu D."/>
            <person name="Yu G."/>
            <person name="Fraser C.M."/>
            <person name="Venter J.C."/>
            <person name="Davis R.W."/>
        </authorList>
    </citation>
    <scope>NUCLEOTIDE SEQUENCE [LARGE SCALE GENOMIC DNA]</scope>
    <source>
        <strain>cv. Columbia</strain>
    </source>
</reference>
<reference key="2">
    <citation type="journal article" date="2017" name="Plant J.">
        <title>Araport11: a complete reannotation of the Arabidopsis thaliana reference genome.</title>
        <authorList>
            <person name="Cheng C.Y."/>
            <person name="Krishnakumar V."/>
            <person name="Chan A.P."/>
            <person name="Thibaud-Nissen F."/>
            <person name="Schobel S."/>
            <person name="Town C.D."/>
        </authorList>
    </citation>
    <scope>GENOME REANNOTATION</scope>
    <source>
        <strain>cv. Columbia</strain>
    </source>
</reference>
<reference key="3">
    <citation type="journal article" date="2003" name="Science">
        <title>Empirical analysis of transcriptional activity in the Arabidopsis genome.</title>
        <authorList>
            <person name="Yamada K."/>
            <person name="Lim J."/>
            <person name="Dale J.M."/>
            <person name="Chen H."/>
            <person name="Shinn P."/>
            <person name="Palm C.J."/>
            <person name="Southwick A.M."/>
            <person name="Wu H.C."/>
            <person name="Kim C.J."/>
            <person name="Nguyen M."/>
            <person name="Pham P.K."/>
            <person name="Cheuk R.F."/>
            <person name="Karlin-Newmann G."/>
            <person name="Liu S.X."/>
            <person name="Lam B."/>
            <person name="Sakano H."/>
            <person name="Wu T."/>
            <person name="Yu G."/>
            <person name="Miranda M."/>
            <person name="Quach H.L."/>
            <person name="Tripp M."/>
            <person name="Chang C.H."/>
            <person name="Lee J.M."/>
            <person name="Toriumi M.J."/>
            <person name="Chan M.M."/>
            <person name="Tang C.C."/>
            <person name="Onodera C.S."/>
            <person name="Deng J.M."/>
            <person name="Akiyama K."/>
            <person name="Ansari Y."/>
            <person name="Arakawa T."/>
            <person name="Banh J."/>
            <person name="Banno F."/>
            <person name="Bowser L."/>
            <person name="Brooks S.Y."/>
            <person name="Carninci P."/>
            <person name="Chao Q."/>
            <person name="Choy N."/>
            <person name="Enju A."/>
            <person name="Goldsmith A.D."/>
            <person name="Gurjal M."/>
            <person name="Hansen N.F."/>
            <person name="Hayashizaki Y."/>
            <person name="Johnson-Hopson C."/>
            <person name="Hsuan V.W."/>
            <person name="Iida K."/>
            <person name="Karnes M."/>
            <person name="Khan S."/>
            <person name="Koesema E."/>
            <person name="Ishida J."/>
            <person name="Jiang P.X."/>
            <person name="Jones T."/>
            <person name="Kawai J."/>
            <person name="Kamiya A."/>
            <person name="Meyers C."/>
            <person name="Nakajima M."/>
            <person name="Narusaka M."/>
            <person name="Seki M."/>
            <person name="Sakurai T."/>
            <person name="Satou M."/>
            <person name="Tamse R."/>
            <person name="Vaysberg M."/>
            <person name="Wallender E.K."/>
            <person name="Wong C."/>
            <person name="Yamamura Y."/>
            <person name="Yuan S."/>
            <person name="Shinozaki K."/>
            <person name="Davis R.W."/>
            <person name="Theologis A."/>
            <person name="Ecker J.R."/>
        </authorList>
    </citation>
    <scope>NUCLEOTIDE SEQUENCE [LARGE SCALE MRNA]</scope>
    <source>
        <strain>cv. Columbia</strain>
    </source>
</reference>
<reference key="4">
    <citation type="submission" date="2002-03" db="EMBL/GenBank/DDBJ databases">
        <title>Full-length cDNA from Arabidopsis thaliana.</title>
        <authorList>
            <person name="Brover V.V."/>
            <person name="Troukhan M.E."/>
            <person name="Alexandrov N.A."/>
            <person name="Lu Y.-P."/>
            <person name="Flavell R.B."/>
            <person name="Feldmann K.A."/>
        </authorList>
    </citation>
    <scope>NUCLEOTIDE SEQUENCE [LARGE SCALE MRNA]</scope>
</reference>
<reference key="5">
    <citation type="journal article" date="2009" name="Plant Physiol.">
        <title>Large-scale Arabidopsis phosphoproteome profiling reveals novel chloroplast kinase substrates and phosphorylation networks.</title>
        <authorList>
            <person name="Reiland S."/>
            <person name="Messerli G."/>
            <person name="Baerenfaller K."/>
            <person name="Gerrits B."/>
            <person name="Endler A."/>
            <person name="Grossmann J."/>
            <person name="Gruissem W."/>
            <person name="Baginsky S."/>
        </authorList>
    </citation>
    <scope>IDENTIFICATION BY MASS SPECTROMETRY [LARGE SCALE ANALYSIS]</scope>
</reference>
<reference key="6">
    <citation type="journal article" date="2012" name="Mol. Cell. Proteomics">
        <title>Comparative large-scale characterisation of plant vs. mammal proteins reveals similar and idiosyncratic N-alpha acetylation features.</title>
        <authorList>
            <person name="Bienvenut W.V."/>
            <person name="Sumpton D."/>
            <person name="Martinez A."/>
            <person name="Lilla S."/>
            <person name="Espagne C."/>
            <person name="Meinnel T."/>
            <person name="Giglione C."/>
        </authorList>
    </citation>
    <scope>IDENTIFICATION BY MASS SPECTROMETRY [LARGE SCALE ANALYSIS]</scope>
</reference>
<reference key="7">
    <citation type="journal article" date="2014" name="Plant Cell">
        <title>A DEK domain-containing protein modulates chromatin structure and function in Arabidopsis.</title>
        <authorList>
            <person name="Waidmann S."/>
            <person name="Kusenda B."/>
            <person name="Mayerhofer J."/>
            <person name="Mechtler K."/>
            <person name="Jonak C."/>
        </authorList>
    </citation>
    <scope>INTERACTION WITH DEK3</scope>
    <scope>IDENTIFICATION BY MASS SPECTROMETRY</scope>
    <source>
        <strain>cv. Columbia</strain>
    </source>
</reference>
<organism>
    <name type="scientific">Arabidopsis thaliana</name>
    <name type="common">Mouse-ear cress</name>
    <dbReference type="NCBI Taxonomy" id="3702"/>
    <lineage>
        <taxon>Eukaryota</taxon>
        <taxon>Viridiplantae</taxon>
        <taxon>Streptophyta</taxon>
        <taxon>Embryophyta</taxon>
        <taxon>Tracheophyta</taxon>
        <taxon>Spermatophyta</taxon>
        <taxon>Magnoliopsida</taxon>
        <taxon>eudicotyledons</taxon>
        <taxon>Gunneridae</taxon>
        <taxon>Pentapetalae</taxon>
        <taxon>rosids</taxon>
        <taxon>malvids</taxon>
        <taxon>Brassicales</taxon>
        <taxon>Brassicaceae</taxon>
        <taxon>Camelineae</taxon>
        <taxon>Arabidopsis</taxon>
    </lineage>
</organism>